<evidence type="ECO:0000250" key="1">
    <source>
        <dbReference type="UniProtKB" id="Q337M4"/>
    </source>
</evidence>
<evidence type="ECO:0000255" key="2"/>
<evidence type="ECO:0000269" key="3">
    <source>
    </source>
</evidence>
<evidence type="ECO:0000303" key="4">
    <source>
    </source>
</evidence>
<evidence type="ECO:0000305" key="5"/>
<evidence type="ECO:0000305" key="6">
    <source>
    </source>
</evidence>
<evidence type="ECO:0000312" key="7">
    <source>
        <dbReference type="Araport" id="AT1G07040"/>
    </source>
</evidence>
<evidence type="ECO:0000312" key="8">
    <source>
        <dbReference type="EMBL" id="AAF82216.1"/>
    </source>
</evidence>
<protein>
    <recommendedName>
        <fullName evidence="5">2-oxoadipate dioxygenase/decarboxylase, chloroplastic</fullName>
        <ecNumber evidence="3">1.13.11.93</ecNumber>
    </recommendedName>
    <alternativeName>
        <fullName evidence="4">2-hydroxyglutarate synthase</fullName>
    </alternativeName>
</protein>
<accession>Q9LMJ7</accession>
<feature type="transit peptide" description="Chloroplast" evidence="2">
    <location>
        <begin position="1"/>
        <end position="50"/>
    </location>
</feature>
<feature type="chain" id="PRO_0000458133" description="2-oxoadipate dioxygenase/decarboxylase, chloroplastic">
    <location>
        <begin position="51"/>
        <end position="371"/>
    </location>
</feature>
<feature type="binding site" evidence="1">
    <location>
        <position position="113"/>
    </location>
    <ligand>
        <name>2-oxoadipate</name>
        <dbReference type="ChEBI" id="CHEBI:57499"/>
    </ligand>
</feature>
<feature type="binding site" evidence="1">
    <location>
        <position position="113"/>
    </location>
    <ligand>
        <name>Fe(2+)</name>
        <dbReference type="ChEBI" id="CHEBI:29033"/>
    </ligand>
</feature>
<feature type="binding site" evidence="1">
    <location>
        <position position="117"/>
    </location>
    <ligand>
        <name>2-oxoadipate</name>
        <dbReference type="ChEBI" id="CHEBI:57499"/>
    </ligand>
</feature>
<feature type="binding site" evidence="1">
    <location>
        <position position="250"/>
    </location>
    <ligand>
        <name>Fe(2+)</name>
        <dbReference type="ChEBI" id="CHEBI:29033"/>
    </ligand>
</feature>
<feature type="binding site" evidence="1">
    <location>
        <position position="296"/>
    </location>
    <ligand>
        <name>2-oxoadipate</name>
        <dbReference type="ChEBI" id="CHEBI:57499"/>
    </ligand>
</feature>
<feature type="binding site" evidence="1">
    <location>
        <position position="320"/>
    </location>
    <ligand>
        <name>2-oxoadipate</name>
        <dbReference type="ChEBI" id="CHEBI:57499"/>
    </ligand>
</feature>
<feature type="binding site" evidence="1">
    <location>
        <position position="322"/>
    </location>
    <ligand>
        <name>Fe(2+)</name>
        <dbReference type="ChEBI" id="CHEBI:29033"/>
    </ligand>
</feature>
<sequence length="371" mass="40638">MISLHSSAIKASLYGSFPSSLRSTLSVSFSAGSLIRLPSVGKRNLSVVVSSGRDSSMSSNNVSRGSSSKVAAESFFRSVLGQMETVYLNRNPTPKSVLELVRSVDDQQLCYDHLAFRTFGIGGYGIDSLASFFLDYGYTPMDELKFPAKKLRALWFAPPNASAVPGGSGVNGPLPRVFISELLVDQMSSQTQDVIRKYTEASPNGKKYAGLSSALGTLTWEKPLSSEFEQLARESEYAAWTLVNGYALNHVTISVHRLKSHLNKIKKLNQFLEEKGIKLNSEGGVLKVSPDGGLQQSSTVADSISFKFADGVTKSIPCSYIEFAERLVLPQYQNIPESEIQESHRRDGFEVGNADKIFESTFQEQLSRRTG</sequence>
<organism>
    <name type="scientific">Arabidopsis thaliana</name>
    <name type="common">Mouse-ear cress</name>
    <dbReference type="NCBI Taxonomy" id="3702"/>
    <lineage>
        <taxon>Eukaryota</taxon>
        <taxon>Viridiplantae</taxon>
        <taxon>Streptophyta</taxon>
        <taxon>Embryophyta</taxon>
        <taxon>Tracheophyta</taxon>
        <taxon>Spermatophyta</taxon>
        <taxon>Magnoliopsida</taxon>
        <taxon>eudicotyledons</taxon>
        <taxon>Gunneridae</taxon>
        <taxon>Pentapetalae</taxon>
        <taxon>rosids</taxon>
        <taxon>malvids</taxon>
        <taxon>Brassicales</taxon>
        <taxon>Brassicaceae</taxon>
        <taxon>Camelineae</taxon>
        <taxon>Arabidopsis</taxon>
    </lineage>
</organism>
<gene>
    <name evidence="7" type="ordered locus">At1g07040</name>
    <name evidence="8" type="ORF">F10K1.25</name>
</gene>
<dbReference type="EC" id="1.13.11.93" evidence="3"/>
<dbReference type="EMBL" id="AC067971">
    <property type="protein sequence ID" value="AAF82216.1"/>
    <property type="molecule type" value="Genomic_DNA"/>
</dbReference>
<dbReference type="EMBL" id="CP002684">
    <property type="protein sequence ID" value="AEE28071.1"/>
    <property type="molecule type" value="Genomic_DNA"/>
</dbReference>
<dbReference type="EMBL" id="BT002383">
    <property type="protein sequence ID" value="AAO00743.1"/>
    <property type="molecule type" value="mRNA"/>
</dbReference>
<dbReference type="EMBL" id="BT008835">
    <property type="protein sequence ID" value="AAP68274.1"/>
    <property type="molecule type" value="mRNA"/>
</dbReference>
<dbReference type="EMBL" id="AK226231">
    <property type="protein sequence ID" value="BAE98395.1"/>
    <property type="molecule type" value="mRNA"/>
</dbReference>
<dbReference type="EMBL" id="AY087534">
    <property type="protein sequence ID" value="AAM65076.1"/>
    <property type="molecule type" value="mRNA"/>
</dbReference>
<dbReference type="PIR" id="B86205">
    <property type="entry name" value="B86205"/>
</dbReference>
<dbReference type="RefSeq" id="NP_563777.1">
    <property type="nucleotide sequence ID" value="NM_100578.4"/>
</dbReference>
<dbReference type="SMR" id="Q9LMJ7"/>
<dbReference type="FunCoup" id="Q9LMJ7">
    <property type="interactions" value="136"/>
</dbReference>
<dbReference type="STRING" id="3702.Q9LMJ7"/>
<dbReference type="iPTMnet" id="Q9LMJ7"/>
<dbReference type="PaxDb" id="3702-AT1G07040.1"/>
<dbReference type="ProteomicsDB" id="185090"/>
<dbReference type="EnsemblPlants" id="AT1G07040.1">
    <property type="protein sequence ID" value="AT1G07040.1"/>
    <property type="gene ID" value="AT1G07040"/>
</dbReference>
<dbReference type="GeneID" id="837215"/>
<dbReference type="Gramene" id="AT1G07040.1">
    <property type="protein sequence ID" value="AT1G07040.1"/>
    <property type="gene ID" value="AT1G07040"/>
</dbReference>
<dbReference type="KEGG" id="ath:AT1G07040"/>
<dbReference type="Araport" id="AT1G07040"/>
<dbReference type="TAIR" id="AT1G07040"/>
<dbReference type="eggNOG" id="ENOG502QTNU">
    <property type="taxonomic scope" value="Eukaryota"/>
</dbReference>
<dbReference type="HOGENOM" id="CLU_053061_0_0_1"/>
<dbReference type="InParanoid" id="Q9LMJ7"/>
<dbReference type="OMA" id="FTDFGYV"/>
<dbReference type="OrthoDB" id="1908993at2759"/>
<dbReference type="PRO" id="PR:Q9LMJ7"/>
<dbReference type="Proteomes" id="UP000006548">
    <property type="component" value="Chromosome 1"/>
</dbReference>
<dbReference type="ExpressionAtlas" id="Q9LMJ7">
    <property type="expression patterns" value="baseline and differential"/>
</dbReference>
<dbReference type="GO" id="GO:0009507">
    <property type="term" value="C:chloroplast"/>
    <property type="evidence" value="ECO:0007005"/>
    <property type="project" value="TAIR"/>
</dbReference>
<dbReference type="GO" id="GO:0051213">
    <property type="term" value="F:dioxygenase activity"/>
    <property type="evidence" value="ECO:0007669"/>
    <property type="project" value="UniProtKB-KW"/>
</dbReference>
<dbReference type="GO" id="GO:0046872">
    <property type="term" value="F:metal ion binding"/>
    <property type="evidence" value="ECO:0007669"/>
    <property type="project" value="UniProtKB-KW"/>
</dbReference>
<dbReference type="CDD" id="cd16350">
    <property type="entry name" value="VOC_like"/>
    <property type="match status" value="1"/>
</dbReference>
<dbReference type="Gene3D" id="3.10.180.50">
    <property type="match status" value="2"/>
</dbReference>
<dbReference type="InterPro" id="IPR009770">
    <property type="entry name" value="HGLS"/>
</dbReference>
<dbReference type="PANTHER" id="PTHR31136:SF5">
    <property type="entry name" value="2-OXOADIPATE DIOXYGENASE_DECARBOXYLASE, CHLOROPLASTIC"/>
    <property type="match status" value="1"/>
</dbReference>
<dbReference type="PANTHER" id="PTHR31136">
    <property type="entry name" value="DUF1338 DOMAIN-CONTAINING PROTEIN"/>
    <property type="match status" value="1"/>
</dbReference>
<dbReference type="Pfam" id="PF07063">
    <property type="entry name" value="HGLS"/>
    <property type="match status" value="1"/>
</dbReference>
<dbReference type="SMART" id="SM01150">
    <property type="entry name" value="DUF1338"/>
    <property type="match status" value="1"/>
</dbReference>
<proteinExistence type="evidence at protein level"/>
<keyword id="KW-0150">Chloroplast</keyword>
<keyword id="KW-0223">Dioxygenase</keyword>
<keyword id="KW-0408">Iron</keyword>
<keyword id="KW-0479">Metal-binding</keyword>
<keyword id="KW-0560">Oxidoreductase</keyword>
<keyword id="KW-0934">Plastid</keyword>
<keyword id="KW-1185">Reference proteome</keyword>
<keyword id="KW-0809">Transit peptide</keyword>
<name>HGLS_ARATH</name>
<reference key="1">
    <citation type="journal article" date="2000" name="Nature">
        <title>Sequence and analysis of chromosome 1 of the plant Arabidopsis thaliana.</title>
        <authorList>
            <person name="Theologis A."/>
            <person name="Ecker J.R."/>
            <person name="Palm C.J."/>
            <person name="Federspiel N.A."/>
            <person name="Kaul S."/>
            <person name="White O."/>
            <person name="Alonso J."/>
            <person name="Altafi H."/>
            <person name="Araujo R."/>
            <person name="Bowman C.L."/>
            <person name="Brooks S.Y."/>
            <person name="Buehler E."/>
            <person name="Chan A."/>
            <person name="Chao Q."/>
            <person name="Chen H."/>
            <person name="Cheuk R.F."/>
            <person name="Chin C.W."/>
            <person name="Chung M.K."/>
            <person name="Conn L."/>
            <person name="Conway A.B."/>
            <person name="Conway A.R."/>
            <person name="Creasy T.H."/>
            <person name="Dewar K."/>
            <person name="Dunn P."/>
            <person name="Etgu P."/>
            <person name="Feldblyum T.V."/>
            <person name="Feng J.-D."/>
            <person name="Fong B."/>
            <person name="Fujii C.Y."/>
            <person name="Gill J.E."/>
            <person name="Goldsmith A.D."/>
            <person name="Haas B."/>
            <person name="Hansen N.F."/>
            <person name="Hughes B."/>
            <person name="Huizar L."/>
            <person name="Hunter J.L."/>
            <person name="Jenkins J."/>
            <person name="Johnson-Hopson C."/>
            <person name="Khan S."/>
            <person name="Khaykin E."/>
            <person name="Kim C.J."/>
            <person name="Koo H.L."/>
            <person name="Kremenetskaia I."/>
            <person name="Kurtz D.B."/>
            <person name="Kwan A."/>
            <person name="Lam B."/>
            <person name="Langin-Hooper S."/>
            <person name="Lee A."/>
            <person name="Lee J.M."/>
            <person name="Lenz C.A."/>
            <person name="Li J.H."/>
            <person name="Li Y.-P."/>
            <person name="Lin X."/>
            <person name="Liu S.X."/>
            <person name="Liu Z.A."/>
            <person name="Luros J.S."/>
            <person name="Maiti R."/>
            <person name="Marziali A."/>
            <person name="Militscher J."/>
            <person name="Miranda M."/>
            <person name="Nguyen M."/>
            <person name="Nierman W.C."/>
            <person name="Osborne B.I."/>
            <person name="Pai G."/>
            <person name="Peterson J."/>
            <person name="Pham P.K."/>
            <person name="Rizzo M."/>
            <person name="Rooney T."/>
            <person name="Rowley D."/>
            <person name="Sakano H."/>
            <person name="Salzberg S.L."/>
            <person name="Schwartz J.R."/>
            <person name="Shinn P."/>
            <person name="Southwick A.M."/>
            <person name="Sun H."/>
            <person name="Tallon L.J."/>
            <person name="Tambunga G."/>
            <person name="Toriumi M.J."/>
            <person name="Town C.D."/>
            <person name="Utterback T."/>
            <person name="Van Aken S."/>
            <person name="Vaysberg M."/>
            <person name="Vysotskaia V.S."/>
            <person name="Walker M."/>
            <person name="Wu D."/>
            <person name="Yu G."/>
            <person name="Fraser C.M."/>
            <person name="Venter J.C."/>
            <person name="Davis R.W."/>
        </authorList>
    </citation>
    <scope>NUCLEOTIDE SEQUENCE [LARGE SCALE GENOMIC DNA]</scope>
    <source>
        <strain>cv. Columbia</strain>
    </source>
</reference>
<reference key="2">
    <citation type="journal article" date="2017" name="Plant J.">
        <title>Araport11: a complete reannotation of the Arabidopsis thaliana reference genome.</title>
        <authorList>
            <person name="Cheng C.Y."/>
            <person name="Krishnakumar V."/>
            <person name="Chan A.P."/>
            <person name="Thibaud-Nissen F."/>
            <person name="Schobel S."/>
            <person name="Town C.D."/>
        </authorList>
    </citation>
    <scope>GENOME REANNOTATION</scope>
    <source>
        <strain>cv. Columbia</strain>
    </source>
</reference>
<reference key="3">
    <citation type="journal article" date="2003" name="Science">
        <title>Empirical analysis of transcriptional activity in the Arabidopsis genome.</title>
        <authorList>
            <person name="Yamada K."/>
            <person name="Lim J."/>
            <person name="Dale J.M."/>
            <person name="Chen H."/>
            <person name="Shinn P."/>
            <person name="Palm C.J."/>
            <person name="Southwick A.M."/>
            <person name="Wu H.C."/>
            <person name="Kim C.J."/>
            <person name="Nguyen M."/>
            <person name="Pham P.K."/>
            <person name="Cheuk R.F."/>
            <person name="Karlin-Newmann G."/>
            <person name="Liu S.X."/>
            <person name="Lam B."/>
            <person name="Sakano H."/>
            <person name="Wu T."/>
            <person name="Yu G."/>
            <person name="Miranda M."/>
            <person name="Quach H.L."/>
            <person name="Tripp M."/>
            <person name="Chang C.H."/>
            <person name="Lee J.M."/>
            <person name="Toriumi M.J."/>
            <person name="Chan M.M."/>
            <person name="Tang C.C."/>
            <person name="Onodera C.S."/>
            <person name="Deng J.M."/>
            <person name="Akiyama K."/>
            <person name="Ansari Y."/>
            <person name="Arakawa T."/>
            <person name="Banh J."/>
            <person name="Banno F."/>
            <person name="Bowser L."/>
            <person name="Brooks S.Y."/>
            <person name="Carninci P."/>
            <person name="Chao Q."/>
            <person name="Choy N."/>
            <person name="Enju A."/>
            <person name="Goldsmith A.D."/>
            <person name="Gurjal M."/>
            <person name="Hansen N.F."/>
            <person name="Hayashizaki Y."/>
            <person name="Johnson-Hopson C."/>
            <person name="Hsuan V.W."/>
            <person name="Iida K."/>
            <person name="Karnes M."/>
            <person name="Khan S."/>
            <person name="Koesema E."/>
            <person name="Ishida J."/>
            <person name="Jiang P.X."/>
            <person name="Jones T."/>
            <person name="Kawai J."/>
            <person name="Kamiya A."/>
            <person name="Meyers C."/>
            <person name="Nakajima M."/>
            <person name="Narusaka M."/>
            <person name="Seki M."/>
            <person name="Sakurai T."/>
            <person name="Satou M."/>
            <person name="Tamse R."/>
            <person name="Vaysberg M."/>
            <person name="Wallender E.K."/>
            <person name="Wong C."/>
            <person name="Yamamura Y."/>
            <person name="Yuan S."/>
            <person name="Shinozaki K."/>
            <person name="Davis R.W."/>
            <person name="Theologis A."/>
            <person name="Ecker J.R."/>
        </authorList>
    </citation>
    <scope>NUCLEOTIDE SEQUENCE [LARGE SCALE MRNA]</scope>
    <source>
        <strain>cv. Columbia</strain>
    </source>
</reference>
<reference key="4">
    <citation type="submission" date="2006-07" db="EMBL/GenBank/DDBJ databases">
        <title>Large-scale analysis of RIKEN Arabidopsis full-length (RAFL) cDNAs.</title>
        <authorList>
            <person name="Totoki Y."/>
            <person name="Seki M."/>
            <person name="Ishida J."/>
            <person name="Nakajima M."/>
            <person name="Enju A."/>
            <person name="Kamiya A."/>
            <person name="Narusaka M."/>
            <person name="Shin-i T."/>
            <person name="Nakagawa M."/>
            <person name="Sakamoto N."/>
            <person name="Oishi K."/>
            <person name="Kohara Y."/>
            <person name="Kobayashi M."/>
            <person name="Toyoda A."/>
            <person name="Sakaki Y."/>
            <person name="Sakurai T."/>
            <person name="Iida K."/>
            <person name="Akiyama K."/>
            <person name="Satou M."/>
            <person name="Toyoda T."/>
            <person name="Konagaya A."/>
            <person name="Carninci P."/>
            <person name="Kawai J."/>
            <person name="Hayashizaki Y."/>
            <person name="Shinozaki K."/>
        </authorList>
    </citation>
    <scope>NUCLEOTIDE SEQUENCE [LARGE SCALE MRNA]</scope>
    <source>
        <strain>cv. Columbia</strain>
    </source>
</reference>
<reference key="5">
    <citation type="submission" date="2002-03" db="EMBL/GenBank/DDBJ databases">
        <title>Full-length cDNA from Arabidopsis thaliana.</title>
        <authorList>
            <person name="Brover V.V."/>
            <person name="Troukhan M.E."/>
            <person name="Alexandrov N.A."/>
            <person name="Lu Y.-P."/>
            <person name="Flavell R.B."/>
            <person name="Feldmann K.A."/>
        </authorList>
    </citation>
    <scope>NUCLEOTIDE SEQUENCE [LARGE SCALE MRNA]</scope>
</reference>
<reference key="6">
    <citation type="journal article" date="2020" name="Nat. Commun.">
        <title>An iron (II) dependent oxygenase performs the last missing step of plant lysine catabolism.</title>
        <authorList>
            <person name="Thompson M.G."/>
            <person name="Blake-Hedges J.M."/>
            <person name="Pereira J.H."/>
            <person name="Hangasky J.A."/>
            <person name="Belcher M.S."/>
            <person name="Moore W.M."/>
            <person name="Barajas J.F."/>
            <person name="Cruz-Morales P."/>
            <person name="Washington L.J."/>
            <person name="Haushalter R.W."/>
            <person name="Eiben C.B."/>
            <person name="Liu Y."/>
            <person name="Skyrud W."/>
            <person name="Benites V.T."/>
            <person name="Barnum T.P."/>
            <person name="Baidoo E.E.K."/>
            <person name="Scheller H.V."/>
            <person name="Marletta M.A."/>
            <person name="Shih P.M."/>
            <person name="Adams P.D."/>
            <person name="Keasling J.D."/>
        </authorList>
    </citation>
    <scope>FUNCTION</scope>
    <scope>CATALYTIC ACTIVITY</scope>
    <scope>COFACTOR</scope>
    <scope>DISRUPTION PHENOTYPE</scope>
</reference>
<comment type="function">
    <text evidence="3">Catalyzes the decarboxylation and hydroxylation of 2-oxoadipate (2OA) to form D-2-hydroxyglutarate (D-2-HGA) (PubMed:32523014). Is involved in a D-lysine catabolic pathway (PubMed:32523014).</text>
</comment>
<comment type="catalytic activity">
    <reaction evidence="3">
        <text>2-oxoadipate + O2 = (R)-2-hydroxyglutarate + CO2</text>
        <dbReference type="Rhea" id="RHEA:71787"/>
        <dbReference type="ChEBI" id="CHEBI:15379"/>
        <dbReference type="ChEBI" id="CHEBI:15801"/>
        <dbReference type="ChEBI" id="CHEBI:16526"/>
        <dbReference type="ChEBI" id="CHEBI:57499"/>
        <dbReference type="EC" id="1.13.11.93"/>
    </reaction>
    <physiologicalReaction direction="left-to-right" evidence="3">
        <dbReference type="Rhea" id="RHEA:71788"/>
    </physiologicalReaction>
</comment>
<comment type="cofactor">
    <cofactor evidence="6">
        <name>Fe(2+)</name>
        <dbReference type="ChEBI" id="CHEBI:29033"/>
    </cofactor>
</comment>
<comment type="pathway">
    <text evidence="5">Amino-acid degradation.</text>
</comment>
<comment type="subcellular location">
    <subcellularLocation>
        <location evidence="2">Plastid</location>
        <location evidence="2">Chloroplast</location>
    </subcellularLocation>
</comment>
<comment type="disruption phenotype">
    <text evidence="3">Delayed germination, compromised development, cholortic phenotype with impaired growth, due to lysine accumulation.</text>
</comment>
<comment type="similarity">
    <text evidence="5">Belongs to the 2-oxoadipate dioxygenase/decarboxylase family.</text>
</comment>